<keyword id="KW-0027">Amidation</keyword>
<keyword id="KW-0903">Direct protein sequencing</keyword>
<keyword id="KW-0964">Secreted</keyword>
<keyword id="KW-0800">Toxin</keyword>
<evidence type="ECO:0000269" key="1">
    <source>
    </source>
</evidence>
<evidence type="ECO:0000303" key="2">
    <source>
    </source>
</evidence>
<evidence type="ECO:0000303" key="3">
    <source ref="2"/>
</evidence>
<evidence type="ECO:0000305" key="4"/>
<evidence type="ECO:0000305" key="5">
    <source>
    </source>
</evidence>
<proteinExistence type="evidence at protein level"/>
<feature type="peptide" id="PRO_0000421218" description="Short cationic peptide-4d" evidence="1">
    <location>
        <begin position="1"/>
        <end position="20"/>
    </location>
</feature>
<feature type="modified residue" description="Glutamic acid 1-amide" evidence="1">
    <location>
        <position position="20"/>
    </location>
</feature>
<comment type="subcellular location">
    <subcellularLocation>
        <location evidence="1">Secreted</location>
    </subcellularLocation>
</comment>
<comment type="tissue specificity">
    <text evidence="5">Expressed by the venom gland.</text>
</comment>
<comment type="mass spectrometry" mass="2249.378" method="Electrospray" evidence="1"/>
<comment type="similarity">
    <text evidence="4">Belongs to the cationic peptide 04 (cupiennin) family. 04 subfamily.</text>
</comment>
<sequence length="20" mass="2252">FLAKNVAKKLVSHVAKKQLE</sequence>
<name>TXS4D_CUPSA</name>
<protein>
    <recommendedName>
        <fullName evidence="3">Short cationic peptide-4d</fullName>
        <shortName evidence="3">SCP-4d</shortName>
    </recommendedName>
    <alternativeName>
        <fullName evidence="2">Short cationic peptide-4f</fullName>
        <shortName evidence="2">SCP-4f</shortName>
    </alternativeName>
    <alternativeName>
        <fullName evidence="3">Truncated variant of Cupiennin 4 family</fullName>
    </alternativeName>
</protein>
<organism>
    <name type="scientific">Cupiennius salei</name>
    <name type="common">American wandering spider</name>
    <dbReference type="NCBI Taxonomy" id="6928"/>
    <lineage>
        <taxon>Eukaryota</taxon>
        <taxon>Metazoa</taxon>
        <taxon>Ecdysozoa</taxon>
        <taxon>Arthropoda</taxon>
        <taxon>Chelicerata</taxon>
        <taxon>Arachnida</taxon>
        <taxon>Araneae</taxon>
        <taxon>Araneomorphae</taxon>
        <taxon>Entelegynae</taxon>
        <taxon>Lycosoidea</taxon>
        <taxon>Ctenidae</taxon>
        <taxon>Cupiennius</taxon>
    </lineage>
</organism>
<dbReference type="GO" id="GO:0005576">
    <property type="term" value="C:extracellular region"/>
    <property type="evidence" value="ECO:0007669"/>
    <property type="project" value="UniProtKB-SubCell"/>
</dbReference>
<dbReference type="GO" id="GO:0090729">
    <property type="term" value="F:toxin activity"/>
    <property type="evidence" value="ECO:0007669"/>
    <property type="project" value="UniProtKB-KW"/>
</dbReference>
<dbReference type="GO" id="GO:0042742">
    <property type="term" value="P:defense response to bacterium"/>
    <property type="evidence" value="ECO:0007669"/>
    <property type="project" value="InterPro"/>
</dbReference>
<dbReference type="InterPro" id="IPR035164">
    <property type="entry name" value="Cupiennin"/>
</dbReference>
<dbReference type="Pfam" id="PF17563">
    <property type="entry name" value="Cu"/>
    <property type="match status" value="1"/>
</dbReference>
<reference key="1">
    <citation type="journal article" date="2012" name="FEBS J.">
        <title>Multicomponent venom of the spider Cupiennius salei: a bioanalytical investigation applying different strategies.</title>
        <authorList>
            <person name="Trachsel C."/>
            <person name="Siegemund D."/>
            <person name="Kampfer U."/>
            <person name="Kopp L.S."/>
            <person name="Buhr C."/>
            <person name="Grossmann J."/>
            <person name="Luthi C."/>
            <person name="Cunningham M."/>
            <person name="Nentwig W."/>
            <person name="Kuhn-Nentwig L."/>
            <person name="Schurch S."/>
            <person name="Schaller J."/>
        </authorList>
    </citation>
    <scope>PROTEIN SEQUENCE</scope>
    <scope>MASS SPECTROMETRY</scope>
    <scope>AMIDATION AT GLU-20</scope>
    <source>
        <tissue>Venom</tissue>
    </source>
</reference>
<reference key="2">
    <citation type="unpublished observations" date="2015-06">
        <authorList>
            <person name="Kuhn-Nentwig L."/>
            <person name="Gohel T."/>
        </authorList>
    </citation>
    <scope>NOMENCLATURE</scope>
</reference>
<accession>B3EWW1</accession>